<name>WRKY5_ORYSJ</name>
<sequence>MEMMVQKQRHEEGEEERGGLCAREIKELDFFSAAGAGAGRRDDDDVLRADGISSSHAGFMVSTALDLLTAVNDGDHHEEKKGQSNIHQSKQMDAAATTVEGELRQAGEENRRLRRRLEELTSSYGALYHQLVQAQQLHTKHQQQAPIAGVQLLDALAAASPASHRRRAAAAVDGDRTADSDGGEGDENVSPSLGSKRPAAAATLTRLTPESGSGGENNGGGEQAPAAEMAPCRKARVSVRARSEAPMISDGCQWRKYGQKMAKGNPCPRAYYRCTMASQCPVRKQVQRCAEDKSILITTYEGTHSHPLPPAAAAMAKTTSAAAAMLLSGPAVSRDALFAAHHHVVAPPPFFHHPYAGSTMATLSASAPFPTITLDLTQPPPTTTTTAAAAMLQLHRPYAFSSLPFSMYGAGGGSHRPPVVLPPPSSVVETMTAAITRDPNFTTAVAAALSSIMAGGGAQARTPPRGGSDAAGDINGGGGADHATAGARAAAAATQPCGTSPT</sequence>
<comment type="function">
    <text evidence="4 5">Transcription factor that acts as a positive regulator of leaf senescence (PubMed:31505875). Is involved in both the onset and progression of leaf senescence (PubMed:31505875). Upregulates the expression of genes controlling chlorophyll degradation and leaf senescence (PubMed:31505875). Acts as a positive regulator of the senescence-associated NAC genes NAC4 and NAC58 (PubMed:31505875). Acts as a positive regulator of abscisic acid (ABA) biosynthesis during leaf senescence (PubMed:31505875). Acts as a negative regulator of drought tolerance by inhibiting ABA-induced stomatal closure during drought stress (PubMed:34718775). Functions as a direct negative regulator of MYB2 transcription through binding to the repeated W-boxes of the MYB2 promoter region (PubMed:34718775).</text>
</comment>
<comment type="subunit">
    <text evidence="4">Forms homodimers.</text>
</comment>
<comment type="subcellular location">
    <subcellularLocation>
        <location evidence="2 4">Nucleus</location>
    </subcellularLocation>
</comment>
<comment type="tissue specificity">
    <text evidence="4 5">Highly expressed in leaf blades and leaf sheaths (PubMed:31505875, PubMed:34718775). Expressed in roots, culms and panicles (PubMed:31505875).</text>
</comment>
<comment type="induction">
    <text evidence="4 5">Induced in leaves during natural senescence and dark-induced senescence (PubMed:31505875). Down-regulated by abscisic acid (ABA) and jasmonate (MeJA) (PubMed:31505875). Down-regulated by salt, mannitol-induced osmotic stress and drought stress (PubMed:34718775).</text>
</comment>
<comment type="disruption phenotype">
    <text evidence="4 5">The leaves of the oswrky5 mutant plants retain leaf greenness during dark-induced senescence (PubMed:31505875). The mutant plants exhibit tolerance to mannitol-induced osmotic stress (PubMed:31505875). Enhanced tolerance to drought stress (PubMed:34718775).</text>
</comment>
<comment type="miscellaneous">
    <text evidence="4">The gain-of-function mutant plants oswrky5-D (T-DNA activation tagging) promote leaf senescence under natural and dark-induced senescence conditions (PubMed:31505875). Overexpression of WRKY5 reduces grain yield under normal and drought stress conditions (PubMed:31505875).</text>
</comment>
<comment type="similarity">
    <text evidence="7">Belongs to the WRKY group II family.</text>
</comment>
<comment type="sequence caution" evidence="7">
    <conflict type="erroneous gene model prediction">
        <sequence resource="EMBL-CDS" id="BAS92167"/>
    </conflict>
</comment>
<proteinExistence type="evidence at transcript level"/>
<protein>
    <recommendedName>
        <fullName evidence="7">Transcription factor WRKY5</fullName>
        <shortName evidence="6">OsWRKY5</shortName>
    </recommendedName>
    <alternativeName>
        <fullName evidence="7">WRKY transcription factor 5</fullName>
    </alternativeName>
</protein>
<evidence type="ECO:0000255" key="1"/>
<evidence type="ECO:0000255" key="2">
    <source>
        <dbReference type="PROSITE-ProRule" id="PRU00223"/>
    </source>
</evidence>
<evidence type="ECO:0000256" key="3">
    <source>
        <dbReference type="SAM" id="MobiDB-lite"/>
    </source>
</evidence>
<evidence type="ECO:0000269" key="4">
    <source>
    </source>
</evidence>
<evidence type="ECO:0000269" key="5">
    <source>
    </source>
</evidence>
<evidence type="ECO:0000303" key="6">
    <source>
    </source>
</evidence>
<evidence type="ECO:0000305" key="7"/>
<evidence type="ECO:0000312" key="8">
    <source>
        <dbReference type="EMBL" id="AAS98424.1"/>
    </source>
</evidence>
<evidence type="ECO:0000312" key="9">
    <source>
        <dbReference type="EMBL" id="BAS92167.1"/>
    </source>
</evidence>
<dbReference type="EMBL" id="BK005008">
    <property type="protein sequence ID" value="DAA05070.1"/>
    <property type="molecule type" value="Genomic_DNA"/>
</dbReference>
<dbReference type="EMBL" id="AC093490">
    <property type="protein sequence ID" value="AAS98424.1"/>
    <property type="molecule type" value="Genomic_DNA"/>
</dbReference>
<dbReference type="EMBL" id="AP014961">
    <property type="protein sequence ID" value="BAS92167.1"/>
    <property type="status" value="ALT_SEQ"/>
    <property type="molecule type" value="Genomic_DNA"/>
</dbReference>
<dbReference type="SMR" id="Q75L34"/>
<dbReference type="STRING" id="39947.A0A0P0WHU6"/>
<dbReference type="PaxDb" id="39947-A0A0P0WHU6"/>
<dbReference type="GeneID" id="107276141"/>
<dbReference type="KEGG" id="osa:107276141"/>
<dbReference type="eggNOG" id="ENOG502SM8W">
    <property type="taxonomic scope" value="Eukaryota"/>
</dbReference>
<dbReference type="OrthoDB" id="690012at2759"/>
<dbReference type="Proteomes" id="UP000000763">
    <property type="component" value="Chromosome 5"/>
</dbReference>
<dbReference type="Proteomes" id="UP000059680">
    <property type="component" value="Chromosome 5"/>
</dbReference>
<dbReference type="GO" id="GO:0005634">
    <property type="term" value="C:nucleus"/>
    <property type="evidence" value="ECO:0000314"/>
    <property type="project" value="UniProtKB"/>
</dbReference>
<dbReference type="GO" id="GO:0003700">
    <property type="term" value="F:DNA-binding transcription factor activity"/>
    <property type="evidence" value="ECO:0007669"/>
    <property type="project" value="InterPro"/>
</dbReference>
<dbReference type="GO" id="GO:0042803">
    <property type="term" value="F:protein homodimerization activity"/>
    <property type="evidence" value="ECO:0000314"/>
    <property type="project" value="UniProtKB"/>
</dbReference>
<dbReference type="GO" id="GO:0043565">
    <property type="term" value="F:sequence-specific DNA binding"/>
    <property type="evidence" value="ECO:0007669"/>
    <property type="project" value="InterPro"/>
</dbReference>
<dbReference type="GO" id="GO:0009738">
    <property type="term" value="P:abscisic acid-activated signaling pathway"/>
    <property type="evidence" value="ECO:0000315"/>
    <property type="project" value="UniProtKB"/>
</dbReference>
<dbReference type="GO" id="GO:1901527">
    <property type="term" value="P:abscisic acid-activated signaling pathway involved in stomatal movement"/>
    <property type="evidence" value="ECO:0000315"/>
    <property type="project" value="UniProtKB"/>
</dbReference>
<dbReference type="GO" id="GO:1900057">
    <property type="term" value="P:positive regulation of leaf senescence"/>
    <property type="evidence" value="ECO:0000315"/>
    <property type="project" value="UniProtKB"/>
</dbReference>
<dbReference type="GO" id="GO:0006355">
    <property type="term" value="P:regulation of DNA-templated transcription"/>
    <property type="evidence" value="ECO:0000314"/>
    <property type="project" value="UniProtKB"/>
</dbReference>
<dbReference type="FunFam" id="2.20.25.80:FF:000002">
    <property type="entry name" value="probable WRKY transcription factor 31"/>
    <property type="match status" value="1"/>
</dbReference>
<dbReference type="Gene3D" id="2.20.25.80">
    <property type="entry name" value="WRKY domain"/>
    <property type="match status" value="1"/>
</dbReference>
<dbReference type="InterPro" id="IPR003657">
    <property type="entry name" value="WRKY_dom"/>
</dbReference>
<dbReference type="InterPro" id="IPR036576">
    <property type="entry name" value="WRKY_dom_sf"/>
</dbReference>
<dbReference type="InterPro" id="IPR044810">
    <property type="entry name" value="WRKY_plant"/>
</dbReference>
<dbReference type="PANTHER" id="PTHR31429:SF41">
    <property type="entry name" value="TRANSCRIPTION FACTOR WRKY5"/>
    <property type="match status" value="1"/>
</dbReference>
<dbReference type="PANTHER" id="PTHR31429">
    <property type="entry name" value="WRKY TRANSCRIPTION FACTOR 36-RELATED"/>
    <property type="match status" value="1"/>
</dbReference>
<dbReference type="Pfam" id="PF03106">
    <property type="entry name" value="WRKY"/>
    <property type="match status" value="1"/>
</dbReference>
<dbReference type="SMART" id="SM00774">
    <property type="entry name" value="WRKY"/>
    <property type="match status" value="1"/>
</dbReference>
<dbReference type="SUPFAM" id="SSF118290">
    <property type="entry name" value="WRKY DNA-binding domain"/>
    <property type="match status" value="1"/>
</dbReference>
<dbReference type="PROSITE" id="PS50811">
    <property type="entry name" value="WRKY"/>
    <property type="match status" value="1"/>
</dbReference>
<reference key="1">
    <citation type="journal article" date="2004" name="Plant Physiol.">
        <title>A rice WRKY gene encodes a transcriptional repressor of the gibberellin signaling pathway in aleurone cells.</title>
        <authorList>
            <person name="Zhang Z.-L."/>
            <person name="Xie Z."/>
            <person name="Zou X."/>
            <person name="Casaretto J."/>
            <person name="Ho T.-H.D."/>
            <person name="Shen Q.J."/>
        </authorList>
    </citation>
    <scope>NUCLEOTIDE SEQUENCE [GENOMIC DNA]</scope>
</reference>
<reference key="2">
    <citation type="journal article" date="2005" name="Mol. Genet. Genomics">
        <title>A fine physical map of the rice chromosome 5.</title>
        <authorList>
            <person name="Cheng C.-H."/>
            <person name="Chung M.C."/>
            <person name="Liu S.-M."/>
            <person name="Chen S.-K."/>
            <person name="Kao F.Y."/>
            <person name="Lin S.-J."/>
            <person name="Hsiao S.-H."/>
            <person name="Tseng I.C."/>
            <person name="Hsing Y.-I.C."/>
            <person name="Wu H.-P."/>
            <person name="Chen C.-S."/>
            <person name="Shaw J.-F."/>
            <person name="Wu J."/>
            <person name="Matsumoto T."/>
            <person name="Sasaki T."/>
            <person name="Chen H.-C."/>
            <person name="Chow T.-Y."/>
        </authorList>
    </citation>
    <scope>NUCLEOTIDE SEQUENCE [LARGE SCALE GENOMIC DNA]</scope>
    <source>
        <strain>cv. Nipponbare</strain>
    </source>
</reference>
<reference key="3">
    <citation type="journal article" date="2005" name="Nature">
        <title>The map-based sequence of the rice genome.</title>
        <authorList>
            <consortium name="International rice genome sequencing project (IRGSP)"/>
        </authorList>
    </citation>
    <scope>NUCLEOTIDE SEQUENCE [LARGE SCALE GENOMIC DNA]</scope>
    <source>
        <strain>cv. Nipponbare</strain>
    </source>
</reference>
<reference key="4">
    <citation type="journal article" date="2013" name="Rice">
        <title>Improvement of the Oryza sativa Nipponbare reference genome using next generation sequence and optical map data.</title>
        <authorList>
            <person name="Kawahara Y."/>
            <person name="de la Bastide M."/>
            <person name="Hamilton J.P."/>
            <person name="Kanamori H."/>
            <person name="McCombie W.R."/>
            <person name="Ouyang S."/>
            <person name="Schwartz D.C."/>
            <person name="Tanaka T."/>
            <person name="Wu J."/>
            <person name="Zhou S."/>
            <person name="Childs K.L."/>
            <person name="Davidson R.M."/>
            <person name="Lin H."/>
            <person name="Quesada-Ocampo L."/>
            <person name="Vaillancourt B."/>
            <person name="Sakai H."/>
            <person name="Lee S.S."/>
            <person name="Kim J."/>
            <person name="Numa H."/>
            <person name="Itoh T."/>
            <person name="Buell C.R."/>
            <person name="Matsumoto T."/>
        </authorList>
    </citation>
    <scope>GENOME REANNOTATION</scope>
    <source>
        <strain>cv. Nipponbare</strain>
    </source>
</reference>
<reference key="5">
    <citation type="journal article" date="2019" name="Int. J. Mol. Sci.">
        <title>OsWRKY5 promotes rice leaf senescence via senescence-associated NAC and abscisic acid biosynthesis pathway.</title>
        <authorList>
            <person name="Kim T."/>
            <person name="Kang K."/>
            <person name="Kim S.H."/>
            <person name="An G."/>
            <person name="Paek N.C."/>
        </authorList>
    </citation>
    <scope>FUNCTION</scope>
    <scope>HOMODIMERIZATION</scope>
    <scope>SUBCELLULAR LOCATION</scope>
    <scope>TISSUE SPECIFICITY</scope>
    <scope>INDUCTION</scope>
    <scope>DISRUPTION PHENOTYPE</scope>
</reference>
<reference key="6">
    <citation type="journal article" date="2022" name="Plant Physiol.">
        <title>Inactivating transcription factor OsWRKY5 enhances drought tolerance through abscisic acid signaling pathways.</title>
        <authorList>
            <person name="Lim C."/>
            <person name="Kang K."/>
            <person name="Shim Y."/>
            <person name="Yoo S.C."/>
            <person name="Paek N.C."/>
        </authorList>
    </citation>
    <scope>FUNCTION</scope>
    <scope>TISSUE SPECIFICITY</scope>
    <scope>INDUCTION</scope>
    <scope>DISRUPTION PHENOTYPE</scope>
</reference>
<keyword id="KW-0938">Abscisic acid signaling pathway</keyword>
<keyword id="KW-0175">Coiled coil</keyword>
<keyword id="KW-0238">DNA-binding</keyword>
<keyword id="KW-0539">Nucleus</keyword>
<keyword id="KW-1185">Reference proteome</keyword>
<keyword id="KW-0804">Transcription</keyword>
<keyword id="KW-0805">Transcription regulation</keyword>
<gene>
    <name evidence="6" type="primary">WRKY5</name>
    <name evidence="9" type="ordered locus">Os05g0137500</name>
    <name evidence="7" type="ordered locus">LOC_Os05g04640</name>
    <name evidence="8" type="ORF">OJ1127_B08.14</name>
</gene>
<organism>
    <name type="scientific">Oryza sativa subsp. japonica</name>
    <name type="common">Rice</name>
    <dbReference type="NCBI Taxonomy" id="39947"/>
    <lineage>
        <taxon>Eukaryota</taxon>
        <taxon>Viridiplantae</taxon>
        <taxon>Streptophyta</taxon>
        <taxon>Embryophyta</taxon>
        <taxon>Tracheophyta</taxon>
        <taxon>Spermatophyta</taxon>
        <taxon>Magnoliopsida</taxon>
        <taxon>Liliopsida</taxon>
        <taxon>Poales</taxon>
        <taxon>Poaceae</taxon>
        <taxon>BOP clade</taxon>
        <taxon>Oryzoideae</taxon>
        <taxon>Oryzeae</taxon>
        <taxon>Oryzinae</taxon>
        <taxon>Oryza</taxon>
        <taxon>Oryza sativa</taxon>
    </lineage>
</organism>
<accession>Q75L34</accession>
<accession>A0A0P0WHU6</accession>
<accession>Q6IES6</accession>
<feature type="chain" id="PRO_0000456286" description="Transcription factor WRKY5">
    <location>
        <begin position="1"/>
        <end position="502"/>
    </location>
</feature>
<feature type="DNA-binding region" description="WRKY" evidence="2">
    <location>
        <begin position="243"/>
        <end position="309"/>
    </location>
</feature>
<feature type="region of interest" description="Disordered" evidence="3">
    <location>
        <begin position="75"/>
        <end position="95"/>
    </location>
</feature>
<feature type="region of interest" description="Disordered" evidence="3">
    <location>
        <begin position="166"/>
        <end position="231"/>
    </location>
</feature>
<feature type="region of interest" description="Disordered" evidence="3">
    <location>
        <begin position="456"/>
        <end position="502"/>
    </location>
</feature>
<feature type="coiled-coil region" evidence="1">
    <location>
        <begin position="96"/>
        <end position="123"/>
    </location>
</feature>
<feature type="compositionally biased region" description="Low complexity" evidence="3">
    <location>
        <begin position="197"/>
        <end position="211"/>
    </location>
</feature>
<feature type="compositionally biased region" description="Gly residues" evidence="3">
    <location>
        <begin position="212"/>
        <end position="222"/>
    </location>
</feature>
<feature type="compositionally biased region" description="Low complexity" evidence="3">
    <location>
        <begin position="481"/>
        <end position="493"/>
    </location>
</feature>
<feature type="sequence conflict" description="In Ref. 1; DAA05070." evidence="7" ref="1">
    <original>E</original>
    <variation>K</variation>
    <location>
        <position position="291"/>
    </location>
</feature>
<feature type="sequence conflict" description="In Ref. 2; AAS98424." ref="2">
    <original>S</original>
    <variation>N</variation>
    <location>
        <position position="305"/>
    </location>
</feature>